<name>COL_CANLF</name>
<gene>
    <name type="primary">CLPS</name>
</gene>
<organism>
    <name type="scientific">Canis lupus familiaris</name>
    <name type="common">Dog</name>
    <name type="synonym">Canis familiaris</name>
    <dbReference type="NCBI Taxonomy" id="9615"/>
    <lineage>
        <taxon>Eukaryota</taxon>
        <taxon>Metazoa</taxon>
        <taxon>Chordata</taxon>
        <taxon>Craniata</taxon>
        <taxon>Vertebrata</taxon>
        <taxon>Euteleostomi</taxon>
        <taxon>Mammalia</taxon>
        <taxon>Eutheria</taxon>
        <taxon>Laurasiatheria</taxon>
        <taxon>Carnivora</taxon>
        <taxon>Caniformia</taxon>
        <taxon>Canidae</taxon>
        <taxon>Canis</taxon>
    </lineage>
</organism>
<dbReference type="EMBL" id="X53564">
    <property type="protein sequence ID" value="CAA37636.1"/>
    <property type="molecule type" value="mRNA"/>
</dbReference>
<dbReference type="EMBL" id="M63427">
    <property type="protein sequence ID" value="AAA03513.1"/>
    <property type="molecule type" value="Unassigned_DNA"/>
</dbReference>
<dbReference type="PIR" id="A46717">
    <property type="entry name" value="A46717"/>
</dbReference>
<dbReference type="RefSeq" id="NP_001003287.1">
    <property type="nucleotide sequence ID" value="NM_001003287.1"/>
</dbReference>
<dbReference type="SMR" id="P19090"/>
<dbReference type="FunCoup" id="P19090">
    <property type="interactions" value="26"/>
</dbReference>
<dbReference type="STRING" id="9615.ENSCAFP00000001934"/>
<dbReference type="PaxDb" id="9612-ENSCAFP00000001934"/>
<dbReference type="GeneID" id="403970"/>
<dbReference type="KEGG" id="cfa:403970"/>
<dbReference type="CTD" id="1208"/>
<dbReference type="eggNOG" id="ENOG502S4NY">
    <property type="taxonomic scope" value="Eukaryota"/>
</dbReference>
<dbReference type="HOGENOM" id="CLU_165591_0_0_1"/>
<dbReference type="InParanoid" id="P19090"/>
<dbReference type="OMA" id="CSPKTLY"/>
<dbReference type="OrthoDB" id="9826993at2759"/>
<dbReference type="TreeFam" id="TF336178"/>
<dbReference type="Proteomes" id="UP000002254">
    <property type="component" value="Unplaced"/>
</dbReference>
<dbReference type="Proteomes" id="UP000694429">
    <property type="component" value="Unplaced"/>
</dbReference>
<dbReference type="Proteomes" id="UP000694542">
    <property type="component" value="Unplaced"/>
</dbReference>
<dbReference type="Proteomes" id="UP000805418">
    <property type="component" value="Unplaced"/>
</dbReference>
<dbReference type="GO" id="GO:0005576">
    <property type="term" value="C:extracellular region"/>
    <property type="evidence" value="ECO:0007669"/>
    <property type="project" value="UniProtKB-SubCell"/>
</dbReference>
<dbReference type="GO" id="GO:0008047">
    <property type="term" value="F:enzyme activator activity"/>
    <property type="evidence" value="ECO:0007669"/>
    <property type="project" value="InterPro"/>
</dbReference>
<dbReference type="GO" id="GO:0035473">
    <property type="term" value="F:lipase binding"/>
    <property type="evidence" value="ECO:0007669"/>
    <property type="project" value="InterPro"/>
</dbReference>
<dbReference type="GO" id="GO:0007586">
    <property type="term" value="P:digestion"/>
    <property type="evidence" value="ECO:0007669"/>
    <property type="project" value="UniProtKB-KW"/>
</dbReference>
<dbReference type="GO" id="GO:0016042">
    <property type="term" value="P:lipid catabolic process"/>
    <property type="evidence" value="ECO:0007669"/>
    <property type="project" value="UniProtKB-KW"/>
</dbReference>
<dbReference type="GO" id="GO:0032094">
    <property type="term" value="P:response to food"/>
    <property type="evidence" value="ECO:0000318"/>
    <property type="project" value="GO_Central"/>
</dbReference>
<dbReference type="CDD" id="cd23011">
    <property type="entry name" value="CLPS"/>
    <property type="match status" value="1"/>
</dbReference>
<dbReference type="FunFam" id="2.10.80.10:FF:000005">
    <property type="entry name" value="Colipase"/>
    <property type="match status" value="1"/>
</dbReference>
<dbReference type="Gene3D" id="2.10.80.10">
    <property type="entry name" value="Lipase, subunit A"/>
    <property type="match status" value="1"/>
</dbReference>
<dbReference type="InterPro" id="IPR047576">
    <property type="entry name" value="CLPS_chr"/>
</dbReference>
<dbReference type="InterPro" id="IPR001981">
    <property type="entry name" value="Colipase"/>
</dbReference>
<dbReference type="InterPro" id="IPR017914">
    <property type="entry name" value="Colipase_C"/>
</dbReference>
<dbReference type="InterPro" id="IPR017915">
    <property type="entry name" value="Colipase_CS"/>
</dbReference>
<dbReference type="InterPro" id="IPR017913">
    <property type="entry name" value="Colipase_N"/>
</dbReference>
<dbReference type="PANTHER" id="PTHR10041">
    <property type="entry name" value="COLIPASE"/>
    <property type="match status" value="1"/>
</dbReference>
<dbReference type="PANTHER" id="PTHR10041:SF8">
    <property type="entry name" value="COLIPASE"/>
    <property type="match status" value="1"/>
</dbReference>
<dbReference type="Pfam" id="PF01114">
    <property type="entry name" value="Colipase"/>
    <property type="match status" value="1"/>
</dbReference>
<dbReference type="Pfam" id="PF02740">
    <property type="entry name" value="Colipase_C"/>
    <property type="match status" value="1"/>
</dbReference>
<dbReference type="PRINTS" id="PR00128">
    <property type="entry name" value="COLIPASE"/>
</dbReference>
<dbReference type="SMART" id="SM00023">
    <property type="entry name" value="COLIPASE"/>
    <property type="match status" value="1"/>
</dbReference>
<dbReference type="SUPFAM" id="SSF57190">
    <property type="entry name" value="Colipase-like"/>
    <property type="match status" value="2"/>
</dbReference>
<dbReference type="PROSITE" id="PS00121">
    <property type="entry name" value="COLIPASE_1"/>
    <property type="match status" value="1"/>
</dbReference>
<dbReference type="PROSITE" id="PS51342">
    <property type="entry name" value="COLIPASE_2"/>
    <property type="match status" value="1"/>
</dbReference>
<comment type="function">
    <text evidence="1">Colipase is a cofactor of pancreatic lipase. It allows the lipase to anchor itself to the lipid-water interface. Without colipase the enzyme is washed off by bile salts, which have an inhibitory effect on the lipase.</text>
</comment>
<comment type="function">
    <text evidence="1">Enterostatin has a biological activity as a satiety signal.</text>
</comment>
<comment type="subunit">
    <text evidence="1">Forms a 1:1 stoichiometric complex with pancreatic lipase.</text>
</comment>
<comment type="subcellular location">
    <subcellularLocation>
        <location>Secreted</location>
    </subcellularLocation>
</comment>
<comment type="tissue specificity">
    <text>Expressed by the pancreas.</text>
</comment>
<comment type="similarity">
    <text evidence="3">Belongs to the colipase family.</text>
</comment>
<proteinExistence type="evidence at transcript level"/>
<feature type="signal peptide">
    <location>
        <begin position="1"/>
        <end position="17"/>
    </location>
</feature>
<feature type="propeptide" id="PRO_0000005690" description="Enterostatin, activation peptide" evidence="2">
    <location>
        <begin position="18"/>
        <end position="22"/>
    </location>
</feature>
<feature type="chain" id="PRO_0000005691" description="Colipase">
    <location>
        <begin position="23"/>
        <end position="112"/>
    </location>
</feature>
<feature type="disulfide bond" evidence="3">
    <location>
        <begin position="34"/>
        <end position="45"/>
    </location>
</feature>
<feature type="disulfide bond" evidence="3">
    <location>
        <begin position="40"/>
        <end position="56"/>
    </location>
</feature>
<feature type="disulfide bond" evidence="3">
    <location>
        <begin position="44"/>
        <end position="78"/>
    </location>
</feature>
<feature type="disulfide bond" evidence="3">
    <location>
        <begin position="66"/>
        <end position="86"/>
    </location>
</feature>
<feature type="disulfide bond" evidence="3">
    <location>
        <begin position="80"/>
        <end position="104"/>
    </location>
</feature>
<sequence>MEKILVLLLVALAVVYAVPDPRGIIIHLEDGELCLNSVQCKSKCCHRATGLSLARCAPKASENSECSAKTLYGVYYKCPCERGLTCEGDKSIVGSITNTNFGVCHDAGRSKK</sequence>
<evidence type="ECO:0000250" key="1">
    <source>
        <dbReference type="UniProtKB" id="P04118"/>
    </source>
</evidence>
<evidence type="ECO:0000255" key="2"/>
<evidence type="ECO:0000255" key="3">
    <source>
        <dbReference type="PROSITE-ProRule" id="PRU00674"/>
    </source>
</evidence>
<accession>P19090</accession>
<keyword id="KW-0222">Digestion</keyword>
<keyword id="KW-1015">Disulfide bond</keyword>
<keyword id="KW-0442">Lipid degradation</keyword>
<keyword id="KW-0443">Lipid metabolism</keyword>
<keyword id="KW-1185">Reference proteome</keyword>
<keyword id="KW-0964">Secreted</keyword>
<keyword id="KW-0732">Signal</keyword>
<reference key="1">
    <citation type="journal article" date="1990" name="Nucleic Acids Res.">
        <title>Full length cDNA sequence encoding canine pancreatic colipase.</title>
        <authorList>
            <person name="Fukuoka S."/>
            <person name="Taniguchi Y."/>
            <person name="Kitagawa Y."/>
            <person name="Scheele G."/>
        </authorList>
    </citation>
    <scope>NUCLEOTIDE SEQUENCE [MRNA]</scope>
    <source>
        <tissue>Pancreas</tissue>
    </source>
</reference>
<reference key="2">
    <citation type="journal article" date="1993" name="J. Biol. Chem.">
        <title>Structure of the canine pancreatic colipase gene includes two protein-binding sites in the promoter region.</title>
        <authorList>
            <person name="Fukuoka S."/>
            <person name="Zhang D.E."/>
            <person name="Taniguchi Y."/>
            <person name="Scheele G.A."/>
        </authorList>
    </citation>
    <scope>NUCLEOTIDE SEQUENCE [GENOMIC DNA]</scope>
    <source>
        <tissue>Pancreas</tissue>
    </source>
</reference>
<protein>
    <recommendedName>
        <fullName>Colipase</fullName>
    </recommendedName>
</protein>